<sequence length="555" mass="60340">MAQLSDLEIANLSKLKPISEIARKVGITEDALEPYGHYKAKIDINQIQEQEKKGKVVLVTAMSPTPAGEGKSTVTVGLADAFNKLNHNVTVALREPALGPTFGIKGGATGGGYAQVLPMEDINLHFNGDFHAITTANNALSAFIDNHLHQGNELGIDQRRIEWKRVLDMNDRALRHVNVGLGGTTHGVPREDGFNITVASEIMAILCLSRNIKDLKEKISRITIGYTRHHKPITVSDLKVEGALTLILKDAIKPNLVQTIEGTPALVHGGPFANIAHGCNSILATETARNLSDIVVTEAGFGSDLGAEKFMNIKAREAGFDPSAVVVVATIRALKMHGGVAKDQLQHENIEAVEAGLVNLERHVNNIKKYGVEPIVALNAFIHDTPSETACVKQWAKDNQVRIALTEVWEKGGEGGIELANQVFDVMQEPQNFKHLYELKQPLEAKIETIVKEIYGGSKVNFSSKAQKQLKQFKENGWDEYPICMAKTQYSFSDDQTLLGAPNDFEITIRELEAKTGAGFIVALTGAIMTMPGLPKKPAALNMDVTDDGKAIGLF</sequence>
<accession>Q8CNV9</accession>
<gene>
    <name evidence="1" type="primary">fhs</name>
    <name type="ordered locus">SE_1408</name>
</gene>
<dbReference type="EC" id="6.3.4.3" evidence="1"/>
<dbReference type="EMBL" id="AE015929">
    <property type="protein sequence ID" value="AAO05007.1"/>
    <property type="molecule type" value="Genomic_DNA"/>
</dbReference>
<dbReference type="RefSeq" id="NP_764963.1">
    <property type="nucleotide sequence ID" value="NC_004461.1"/>
</dbReference>
<dbReference type="RefSeq" id="WP_002440219.1">
    <property type="nucleotide sequence ID" value="NZ_WBME01000009.1"/>
</dbReference>
<dbReference type="SMR" id="Q8CNV9"/>
<dbReference type="KEGG" id="sep:SE_1408"/>
<dbReference type="PATRIC" id="fig|176280.10.peg.1375"/>
<dbReference type="eggNOG" id="COG2759">
    <property type="taxonomic scope" value="Bacteria"/>
</dbReference>
<dbReference type="HOGENOM" id="CLU_003601_3_3_9"/>
<dbReference type="OrthoDB" id="9761733at2"/>
<dbReference type="UniPathway" id="UPA00193"/>
<dbReference type="Proteomes" id="UP000001411">
    <property type="component" value="Chromosome"/>
</dbReference>
<dbReference type="GO" id="GO:0005524">
    <property type="term" value="F:ATP binding"/>
    <property type="evidence" value="ECO:0007669"/>
    <property type="project" value="UniProtKB-UniRule"/>
</dbReference>
<dbReference type="GO" id="GO:0004329">
    <property type="term" value="F:formate-tetrahydrofolate ligase activity"/>
    <property type="evidence" value="ECO:0007669"/>
    <property type="project" value="UniProtKB-UniRule"/>
</dbReference>
<dbReference type="GO" id="GO:0035999">
    <property type="term" value="P:tetrahydrofolate interconversion"/>
    <property type="evidence" value="ECO:0007669"/>
    <property type="project" value="UniProtKB-UniRule"/>
</dbReference>
<dbReference type="CDD" id="cd00477">
    <property type="entry name" value="FTHFS"/>
    <property type="match status" value="1"/>
</dbReference>
<dbReference type="FunFam" id="3.30.1510.10:FF:000001">
    <property type="entry name" value="Formate--tetrahydrofolate ligase"/>
    <property type="match status" value="1"/>
</dbReference>
<dbReference type="FunFam" id="3.10.410.10:FF:000001">
    <property type="entry name" value="Putative formate--tetrahydrofolate ligase"/>
    <property type="match status" value="1"/>
</dbReference>
<dbReference type="Gene3D" id="3.30.1510.10">
    <property type="entry name" value="Domain 2, N(10)-formyltetrahydrofolate synthetase"/>
    <property type="match status" value="1"/>
</dbReference>
<dbReference type="Gene3D" id="3.10.410.10">
    <property type="entry name" value="Formyltetrahydrofolate synthetase, domain 3"/>
    <property type="match status" value="1"/>
</dbReference>
<dbReference type="Gene3D" id="3.40.50.300">
    <property type="entry name" value="P-loop containing nucleotide triphosphate hydrolases"/>
    <property type="match status" value="1"/>
</dbReference>
<dbReference type="HAMAP" id="MF_01543">
    <property type="entry name" value="FTHFS"/>
    <property type="match status" value="1"/>
</dbReference>
<dbReference type="InterPro" id="IPR000559">
    <property type="entry name" value="Formate_THF_ligase"/>
</dbReference>
<dbReference type="InterPro" id="IPR020628">
    <property type="entry name" value="Formate_THF_ligase_CS"/>
</dbReference>
<dbReference type="InterPro" id="IPR027417">
    <property type="entry name" value="P-loop_NTPase"/>
</dbReference>
<dbReference type="NCBIfam" id="NF010030">
    <property type="entry name" value="PRK13505.1"/>
    <property type="match status" value="1"/>
</dbReference>
<dbReference type="Pfam" id="PF01268">
    <property type="entry name" value="FTHFS"/>
    <property type="match status" value="1"/>
</dbReference>
<dbReference type="SUPFAM" id="SSF52540">
    <property type="entry name" value="P-loop containing nucleoside triphosphate hydrolases"/>
    <property type="match status" value="1"/>
</dbReference>
<dbReference type="PROSITE" id="PS00721">
    <property type="entry name" value="FTHFS_1"/>
    <property type="match status" value="1"/>
</dbReference>
<dbReference type="PROSITE" id="PS00722">
    <property type="entry name" value="FTHFS_2"/>
    <property type="match status" value="1"/>
</dbReference>
<comment type="catalytic activity">
    <reaction evidence="1">
        <text>(6S)-5,6,7,8-tetrahydrofolate + formate + ATP = (6R)-10-formyltetrahydrofolate + ADP + phosphate</text>
        <dbReference type="Rhea" id="RHEA:20221"/>
        <dbReference type="ChEBI" id="CHEBI:15740"/>
        <dbReference type="ChEBI" id="CHEBI:30616"/>
        <dbReference type="ChEBI" id="CHEBI:43474"/>
        <dbReference type="ChEBI" id="CHEBI:57453"/>
        <dbReference type="ChEBI" id="CHEBI:195366"/>
        <dbReference type="ChEBI" id="CHEBI:456216"/>
        <dbReference type="EC" id="6.3.4.3"/>
    </reaction>
</comment>
<comment type="pathway">
    <text evidence="1">One-carbon metabolism; tetrahydrofolate interconversion.</text>
</comment>
<comment type="similarity">
    <text evidence="1">Belongs to the formate--tetrahydrofolate ligase family.</text>
</comment>
<keyword id="KW-0067">ATP-binding</keyword>
<keyword id="KW-0436">Ligase</keyword>
<keyword id="KW-0547">Nucleotide-binding</keyword>
<keyword id="KW-0554">One-carbon metabolism</keyword>
<reference key="1">
    <citation type="journal article" date="2003" name="Mol. Microbiol.">
        <title>Genome-based analysis of virulence genes in a non-biofilm-forming Staphylococcus epidermidis strain (ATCC 12228).</title>
        <authorList>
            <person name="Zhang Y.-Q."/>
            <person name="Ren S.-X."/>
            <person name="Li H.-L."/>
            <person name="Wang Y.-X."/>
            <person name="Fu G."/>
            <person name="Yang J."/>
            <person name="Qin Z.-Q."/>
            <person name="Miao Y.-G."/>
            <person name="Wang W.-Y."/>
            <person name="Chen R.-S."/>
            <person name="Shen Y."/>
            <person name="Chen Z."/>
            <person name="Yuan Z.-H."/>
            <person name="Zhao G.-P."/>
            <person name="Qu D."/>
            <person name="Danchin A."/>
            <person name="Wen Y.-M."/>
        </authorList>
    </citation>
    <scope>NUCLEOTIDE SEQUENCE [LARGE SCALE GENOMIC DNA]</scope>
    <source>
        <strain>ATCC 12228 / FDA PCI 1200</strain>
    </source>
</reference>
<evidence type="ECO:0000255" key="1">
    <source>
        <dbReference type="HAMAP-Rule" id="MF_01543"/>
    </source>
</evidence>
<feature type="chain" id="PRO_0000199381" description="Formate--tetrahydrofolate ligase">
    <location>
        <begin position="1"/>
        <end position="555"/>
    </location>
</feature>
<feature type="binding site" evidence="1">
    <location>
        <begin position="65"/>
        <end position="72"/>
    </location>
    <ligand>
        <name>ATP</name>
        <dbReference type="ChEBI" id="CHEBI:30616"/>
    </ligand>
</feature>
<organism>
    <name type="scientific">Staphylococcus epidermidis (strain ATCC 12228 / FDA PCI 1200)</name>
    <dbReference type="NCBI Taxonomy" id="176280"/>
    <lineage>
        <taxon>Bacteria</taxon>
        <taxon>Bacillati</taxon>
        <taxon>Bacillota</taxon>
        <taxon>Bacilli</taxon>
        <taxon>Bacillales</taxon>
        <taxon>Staphylococcaceae</taxon>
        <taxon>Staphylococcus</taxon>
    </lineage>
</organism>
<proteinExistence type="inferred from homology"/>
<name>FTHS_STAES</name>
<protein>
    <recommendedName>
        <fullName evidence="1">Formate--tetrahydrofolate ligase</fullName>
        <ecNumber evidence="1">6.3.4.3</ecNumber>
    </recommendedName>
    <alternativeName>
        <fullName evidence="1">Formyltetrahydrofolate synthetase</fullName>
        <shortName evidence="1">FHS</shortName>
        <shortName evidence="1">FTHFS</shortName>
    </alternativeName>
</protein>